<keyword id="KW-0965">Cell junction</keyword>
<keyword id="KW-0966">Cell projection</keyword>
<keyword id="KW-0969">Cilium</keyword>
<keyword id="KW-0963">Cytoplasm</keyword>
<keyword id="KW-0206">Cytoskeleton</keyword>
<keyword id="KW-0597">Phosphoprotein</keyword>
<keyword id="KW-1185">Reference proteome</keyword>
<keyword id="KW-0796">Tight junction</keyword>
<proteinExistence type="evidence at protein level"/>
<evidence type="ECO:0000250" key="1">
    <source>
        <dbReference type="UniProtKB" id="B0DOB4"/>
    </source>
</evidence>
<evidence type="ECO:0000250" key="2">
    <source>
        <dbReference type="UniProtKB" id="O75161"/>
    </source>
</evidence>
<evidence type="ECO:0000256" key="3">
    <source>
        <dbReference type="SAM" id="MobiDB-lite"/>
    </source>
</evidence>
<evidence type="ECO:0000269" key="4">
    <source>
    </source>
</evidence>
<evidence type="ECO:0000269" key="5">
    <source>
    </source>
</evidence>
<evidence type="ECO:0000305" key="6"/>
<comment type="function">
    <text evidence="1 2">Involved in the organization of apical junctions; the function is proposed to implicate a NPHP1-4-8 module. Does not seem to be strictly required for ciliogenesis (By similarity). Required for building functional cilia. Involved in the organization of the subapical actin network in multiciliated epithelial cells. Seems to recruit INT to basal bodies of motile cilia which subsequently interacts with actin-modifying proteins such as DAAM1 (By similarity). In cooperation with INVS may down-regulate the canonical Wnt pathway and promote the Wnt-PCP pathway by regulating expression and subcellular location of disheveled proteins. Stabilizes protein levels of JADE1 and promotes its translocation to the nucleus leading to cooperative inhibition of canonical Wnt signaling (By similarity). Acts as negative regulator of the hippo pathway by association with LATS1 and modifying LATS1-dependent phosphorylation and localization of WWTR1/TAZ (By similarity).</text>
</comment>
<comment type="subunit">
    <text evidence="2 4 5">Interacts with NPHP1 and RPGRIP1L/NPHP8; NPHP1, NPHP4 and RPGRIP1L are proposed to form a functional NPHP1-4-8 module localized to cell-cell contacts and the ciliary transition zone; NPHP4 mediates the interaction between NPHP1 and RPGRIP1L. Interacts with IQCB1/NPHP5; the interaction likely requires additional interactors (PubMed:21565611). Interacts with RPGRIP1, CEP164, JADE1, PALS1, INADL, PARD6A, INVS, DVL2. Interacts with INTU; INTU mediates the interaction between NPHP4 and DAAM1. Interacts with JADE1 (By similarity). Interacts with SPATA7 (PubMed:29899041).</text>
</comment>
<comment type="interaction">
    <interactant intactId="EBI-4281265">
        <id>P59240</id>
    </interactant>
    <interactant intactId="EBI-77230">
        <id>Q9QY53</id>
        <label>Nphp1</label>
    </interactant>
    <organismsDiffer>false</organismsDiffer>
    <experiments>8</experiments>
</comment>
<comment type="interaction">
    <interactant intactId="EBI-4281265">
        <id>P59240</id>
    </interactant>
    <interactant intactId="EBI-4281130">
        <id>Q8CG73</id>
        <label>Rpgrip1l</label>
    </interactant>
    <organismsDiffer>false</organismsDiffer>
    <experiments>4</experiments>
</comment>
<comment type="subcellular location">
    <subcellularLocation>
        <location evidence="4 5">Cytoplasm</location>
        <location evidence="4 5">Cytoskeleton</location>
        <location evidence="4 5">Cilium basal body</location>
    </subcellularLocation>
    <subcellularLocation>
        <location evidence="2">Cytoplasm</location>
        <location evidence="2">Cytoskeleton</location>
        <location evidence="2">Microtubule organizing center</location>
        <location evidence="2">Centrosome</location>
    </subcellularLocation>
    <subcellularLocation>
        <location evidence="4">Cell junction</location>
        <location evidence="4">Tight junction</location>
    </subcellularLocation>
    <text evidence="4 5">In the retinal photoreceptor cell layer, localizes at the connecting cilium (PubMed:29899041). In cultured renal cells, it localizes diffusely in the cytoplasm but, as cells approach confluence, it accumulates to basolateral tight junctions (PubMed:21565611). Localizes to the ciliary transition zone (PubMed:21565611).</text>
</comment>
<comment type="tissue specificity">
    <text evidence="5">Expressed in the retina (at protein level).</text>
</comment>
<comment type="similarity">
    <text evidence="6">Belongs to the NPHP4 family.</text>
</comment>
<organism>
    <name type="scientific">Mus musculus</name>
    <name type="common">Mouse</name>
    <dbReference type="NCBI Taxonomy" id="10090"/>
    <lineage>
        <taxon>Eukaryota</taxon>
        <taxon>Metazoa</taxon>
        <taxon>Chordata</taxon>
        <taxon>Craniata</taxon>
        <taxon>Vertebrata</taxon>
        <taxon>Euteleostomi</taxon>
        <taxon>Mammalia</taxon>
        <taxon>Eutheria</taxon>
        <taxon>Euarchontoglires</taxon>
        <taxon>Glires</taxon>
        <taxon>Rodentia</taxon>
        <taxon>Myomorpha</taxon>
        <taxon>Muroidea</taxon>
        <taxon>Muridae</taxon>
        <taxon>Murinae</taxon>
        <taxon>Mus</taxon>
        <taxon>Mus</taxon>
    </lineage>
</organism>
<sequence length="1425" mass="157269">MGDWHRAFTQNTLVPPHPQRARQLGKESTAFQCILKWLDGPLIKQGILDMLSELECHLRVTLFDVTYKHFFGRTWKTTVKPTNQPSKQPPRITFNEPLYFHTTLSHPSIVAVVEVVTEGRKRDGTLQLLSCGFGILRIFGNKPESPTSAAQDKRLRLYHGTPRALLHPLLQDPIEQNKFMRLMENCSLQYTLKPHPPLEPAFHLLPENLLVSGFQQIPGLLPPHGDTGDALRKPRFQKPTTWHLDDLFFTLYPSLEKFEEELVQLLISDREGVGLLDSGTLEVLERRLHVCVHNGLGFVQRPQVVVLVPEMDVALTRSASFSRKISASSKNSSGNQALVLRSHLRLPEMVSHPAFAIVFQLEYVFNSPSGADGGASSPTSISSVACMHMVRWAVWNPDLEVGPGKVTLPLQGGVQQNPSRCLVYKVPSASMSSEEVKQVESGTIQFQFSLSSDGPTEHANGPRVGRRSSRKMPASPSGTPAPAARDLAATQDSPVGPGLSLSQLTASPLSPALQSSSKPPLQPPDSSQSPEGPQLQAESVLESRVSHLEADLSQPASLQGTPAVEHLQELPFTPLHAPIVVGAQTRSSRSQLSRAAMVLLQSSGFPEILDASQQPVEAVNPIDPVRFNPQKEESDCLRGNEIVLQFLAFSRAAQDCPGTPWPQTVYFTFQFYRFPPETTPRLQLVKLDGTGKSGSGSLSHILVPINKDGSFDAGSPGLQLRYMVDPGFLKPGEQRWFAHYLAAQTLQVDVWDGDSLLLIGSAGVQMKHLLRQGRPAVQVSHELEVVATEYEQEMMAVSGDVAGFGSVKPIGVHTVVKGRLHLTLANVGHACEPRARGSNLLPPSRSRVISNDGASFFSGGSLLIPGGPKRKRVVQAQRLADVDSELAAMLLTHTRAGQGPQAAGQEADAVHKRKLERMRLVRLQEAGGDSDSRRISLLAQHSVRAQHSRDLQVIDAYRERTKAESIAGVLSQAITTHHTLYATLGTAEFFEFALKNPHNTQHTVAIEIDSPELSIILDSQEWRYFKEATGLHTPLEEDMFHLRGSLAPQLYLRPRETAHIPLKFQSFSVGPLAPTQAPAEVITEKDAESGPLWKCSAMPTKHAKVLFRVETGQLIAVLCLTVEPQPHVVDQVFRFYHPELTFLKKAIRLPPWHTLPGAPVGMPGEDPPVHVRCSDPNVICEAQNVGPGEPRDVFLKVASGPSPEIKDFFVVIYADRWLAVPVQTWQVCLHSLQRVDVSCVAGQLTRLSLVLRGTQTVRKVRAFTSHPQELKTDPAGVFVLPPHGVQDLHVGVRPRRAGSRFVHLNLVDIDYHQLVASWLVCLSCRQPLISKAFEITMAAGDEKGTNKRITYTNPYPSRRTYRLHSDRPELLRFKEDSFQVAGGETYTIGLRFLPSGSAGQEEILIYINDHEDKNEETFCVKVLYQ</sequence>
<reference key="1">
    <citation type="journal article" date="2002" name="Nat. Genet.">
        <title>The gene mutated in juvenile nephronophthisis type 4 encodes a novel protein that interacts with nephrocystin.</title>
        <authorList>
            <person name="Mollet G."/>
            <person name="Salomon R."/>
            <person name="Gribouval O."/>
            <person name="Silbermann F."/>
            <person name="Bacq D."/>
            <person name="Landthaler G."/>
            <person name="Milford D."/>
            <person name="Nayir A."/>
            <person name="Rizzoni G."/>
            <person name="Antignac C."/>
            <person name="Saunier S."/>
        </authorList>
    </citation>
    <scope>NUCLEOTIDE SEQUENCE [MRNA]</scope>
</reference>
<reference key="2">
    <citation type="journal article" date="2002" name="Nat. Genet.">
        <authorList>
            <person name="Mollet G."/>
            <person name="Salomon R."/>
            <person name="Gribouval O."/>
            <person name="Silbermann F."/>
            <person name="Bacq D."/>
            <person name="Landthaler G."/>
            <person name="Milford D."/>
            <person name="Nayir A."/>
            <person name="Rizzoni G."/>
            <person name="Antignac C."/>
            <person name="Saunier S."/>
        </authorList>
    </citation>
    <scope>ERRATUM OF PUBMED:12244321</scope>
</reference>
<reference key="3">
    <citation type="journal article" date="2009" name="PLoS Biol.">
        <title>Lineage-specific biology revealed by a finished genome assembly of the mouse.</title>
        <authorList>
            <person name="Church D.M."/>
            <person name="Goodstadt L."/>
            <person name="Hillier L.W."/>
            <person name="Zody M.C."/>
            <person name="Goldstein S."/>
            <person name="She X."/>
            <person name="Bult C.J."/>
            <person name="Agarwala R."/>
            <person name="Cherry J.L."/>
            <person name="DiCuccio M."/>
            <person name="Hlavina W."/>
            <person name="Kapustin Y."/>
            <person name="Meric P."/>
            <person name="Maglott D."/>
            <person name="Birtle Z."/>
            <person name="Marques A.C."/>
            <person name="Graves T."/>
            <person name="Zhou S."/>
            <person name="Teague B."/>
            <person name="Potamousis K."/>
            <person name="Churas C."/>
            <person name="Place M."/>
            <person name="Herschleb J."/>
            <person name="Runnheim R."/>
            <person name="Forrest D."/>
            <person name="Amos-Landgraf J."/>
            <person name="Schwartz D.C."/>
            <person name="Cheng Z."/>
            <person name="Lindblad-Toh K."/>
            <person name="Eichler E.E."/>
            <person name="Ponting C.P."/>
        </authorList>
    </citation>
    <scope>NUCLEOTIDE SEQUENCE [LARGE SCALE GENOMIC DNA]</scope>
    <source>
        <strain>C57BL/6J</strain>
    </source>
</reference>
<reference key="4">
    <citation type="submission" date="2005-07" db="EMBL/GenBank/DDBJ databases">
        <authorList>
            <person name="Mural R.J."/>
            <person name="Adams M.D."/>
            <person name="Myers E.W."/>
            <person name="Smith H.O."/>
            <person name="Venter J.C."/>
        </authorList>
    </citation>
    <scope>NUCLEOTIDE SEQUENCE [LARGE SCALE GENOMIC DNA]</scope>
</reference>
<reference key="5">
    <citation type="journal article" date="2004" name="Genome Res.">
        <title>The status, quality, and expansion of the NIH full-length cDNA project: the Mammalian Gene Collection (MGC).</title>
        <authorList>
            <consortium name="The MGC Project Team"/>
        </authorList>
    </citation>
    <scope>NUCLEOTIDE SEQUENCE [LARGE SCALE MRNA]</scope>
    <source>
        <tissue>Brain</tissue>
    </source>
</reference>
<reference key="6">
    <citation type="journal article" date="2006" name="Mol. Cell. Proteomics">
        <title>Comprehensive identification of phosphorylation sites in postsynaptic density preparations.</title>
        <authorList>
            <person name="Trinidad J.C."/>
            <person name="Specht C.G."/>
            <person name="Thalhammer A."/>
            <person name="Schoepfer R."/>
            <person name="Burlingame A.L."/>
        </authorList>
    </citation>
    <scope>IDENTIFICATION BY MASS SPECTROMETRY [LARGE SCALE ANALYSIS]</scope>
    <source>
        <tissue>Brain</tissue>
    </source>
</reference>
<reference key="7">
    <citation type="journal article" date="2011" name="Cell">
        <title>Mapping the NPHP-JBTS-MKS protein network reveals ciliopathy disease genes and pathways.</title>
        <authorList>
            <person name="Sang L."/>
            <person name="Miller J.J."/>
            <person name="Corbit K.C."/>
            <person name="Giles R.H."/>
            <person name="Brauer M.J."/>
            <person name="Otto E.A."/>
            <person name="Baye L.M."/>
            <person name="Wen X."/>
            <person name="Scales S.J."/>
            <person name="Kwong M."/>
            <person name="Huntzicker E.G."/>
            <person name="Sfakianos M.K."/>
            <person name="Sandoval W."/>
            <person name="Bazan J.F."/>
            <person name="Kulkarni P."/>
            <person name="Garcia-Gonzalo F.R."/>
            <person name="Seol A.D."/>
            <person name="O'Toole J.F."/>
            <person name="Held S."/>
            <person name="Reutter H.M."/>
            <person name="Lane W.S."/>
            <person name="Rafiq M.A."/>
            <person name="Noor A."/>
            <person name="Ansar M."/>
            <person name="Devi A.R."/>
            <person name="Sheffield V.C."/>
            <person name="Slusarski D.C."/>
            <person name="Vincent J.B."/>
            <person name="Doherty D.A."/>
            <person name="Hildebrandt F."/>
            <person name="Reiter J.F."/>
            <person name="Jackson P.K."/>
        </authorList>
    </citation>
    <scope>SUBCELLULAR LOCATION</scope>
    <scope>SUBUNIT</scope>
    <scope>INTERACTION WITH NPHP1; RPGRIP1L AND IQCB1</scope>
</reference>
<reference key="8">
    <citation type="journal article" date="2018" name="J. Cell Biol.">
        <title>SPATA7 maintains a novel photoreceptor-specific zone in the distal connecting cilium.</title>
        <authorList>
            <person name="Dharmat R."/>
            <person name="Eblimit A."/>
            <person name="Robichaux M.A."/>
            <person name="Zhang Z."/>
            <person name="Nguyen T.T."/>
            <person name="Jung S.Y."/>
            <person name="He F."/>
            <person name="Jain A."/>
            <person name="Li Y."/>
            <person name="Qin J."/>
            <person name="Overbeek P."/>
            <person name="Roepman R."/>
            <person name="Mardon G."/>
            <person name="Wensel T.G."/>
            <person name="Chen R."/>
        </authorList>
    </citation>
    <scope>INTERACTION WITH SPATA7</scope>
    <scope>SUBCELLULAR LOCATION</scope>
    <scope>TISSUE SPECIFICITY</scope>
</reference>
<dbReference type="EMBL" id="AY118229">
    <property type="protein sequence ID" value="AAM78559.1"/>
    <property type="molecule type" value="mRNA"/>
</dbReference>
<dbReference type="EMBL" id="AL607109">
    <property type="status" value="NOT_ANNOTATED_CDS"/>
    <property type="molecule type" value="Genomic_DNA"/>
</dbReference>
<dbReference type="EMBL" id="AL611970">
    <property type="status" value="NOT_ANNOTATED_CDS"/>
    <property type="molecule type" value="Genomic_DNA"/>
</dbReference>
<dbReference type="EMBL" id="CH466594">
    <property type="protein sequence ID" value="EDL14939.1"/>
    <property type="molecule type" value="Genomic_DNA"/>
</dbReference>
<dbReference type="EMBL" id="CH466594">
    <property type="protein sequence ID" value="EDL14940.1"/>
    <property type="molecule type" value="Genomic_DNA"/>
</dbReference>
<dbReference type="EMBL" id="BC138370">
    <property type="protein sequence ID" value="AAI38371.1"/>
    <property type="molecule type" value="mRNA"/>
</dbReference>
<dbReference type="CCDS" id="CCDS38985.1"/>
<dbReference type="RefSeq" id="NP_001342667.1">
    <property type="nucleotide sequence ID" value="NM_001355738.1"/>
</dbReference>
<dbReference type="RefSeq" id="NP_001342668.1">
    <property type="nucleotide sequence ID" value="NM_001355739.1"/>
</dbReference>
<dbReference type="RefSeq" id="NP_700473.2">
    <property type="nucleotide sequence ID" value="NM_153424.2"/>
</dbReference>
<dbReference type="RefSeq" id="XP_006538935.1">
    <property type="nucleotide sequence ID" value="XM_006538872.3"/>
</dbReference>
<dbReference type="RefSeq" id="XP_006538936.1">
    <property type="nucleotide sequence ID" value="XM_006538873.3"/>
</dbReference>
<dbReference type="BioGRID" id="234431">
    <property type="interactions" value="215"/>
</dbReference>
<dbReference type="CORUM" id="P59240"/>
<dbReference type="FunCoup" id="P59240">
    <property type="interactions" value="629"/>
</dbReference>
<dbReference type="IntAct" id="P59240">
    <property type="interactions" value="70"/>
</dbReference>
<dbReference type="STRING" id="10090.ENSMUSP00000080128"/>
<dbReference type="MoonProt" id="P59240"/>
<dbReference type="GlyGen" id="P59240">
    <property type="glycosylation" value="2 sites"/>
</dbReference>
<dbReference type="iPTMnet" id="P59240"/>
<dbReference type="PhosphoSitePlus" id="P59240"/>
<dbReference type="PaxDb" id="10090-ENSMUSP00000080128"/>
<dbReference type="PeptideAtlas" id="P59240"/>
<dbReference type="ProteomicsDB" id="293954"/>
<dbReference type="Antibodypedia" id="27030">
    <property type="antibodies" value="114 antibodies from 24 providers"/>
</dbReference>
<dbReference type="DNASU" id="260305"/>
<dbReference type="Ensembl" id="ENSMUST00000056567.6">
    <property type="protein sequence ID" value="ENSMUSP00000049920.6"/>
    <property type="gene ID" value="ENSMUSG00000039577.18"/>
</dbReference>
<dbReference type="Ensembl" id="ENSMUST00000081393.10">
    <property type="protein sequence ID" value="ENSMUSP00000080128.4"/>
    <property type="gene ID" value="ENSMUSG00000039577.18"/>
</dbReference>
<dbReference type="GeneID" id="260305"/>
<dbReference type="KEGG" id="mmu:260305"/>
<dbReference type="UCSC" id="uc008wap.1">
    <property type="organism name" value="mouse"/>
</dbReference>
<dbReference type="AGR" id="MGI:2384210"/>
<dbReference type="CTD" id="261734"/>
<dbReference type="MGI" id="MGI:2384210">
    <property type="gene designation" value="Nphp4"/>
</dbReference>
<dbReference type="VEuPathDB" id="HostDB:ENSMUSG00000039577"/>
<dbReference type="eggNOG" id="ENOG502QUNP">
    <property type="taxonomic scope" value="Eukaryota"/>
</dbReference>
<dbReference type="GeneTree" id="ENSGT00510000048827"/>
<dbReference type="HOGENOM" id="CLU_004882_0_0_1"/>
<dbReference type="InParanoid" id="P59240"/>
<dbReference type="OMA" id="FLLEYTF"/>
<dbReference type="OrthoDB" id="313446at2759"/>
<dbReference type="PhylomeDB" id="P59240"/>
<dbReference type="TreeFam" id="TF351573"/>
<dbReference type="Reactome" id="R-MMU-2028269">
    <property type="pathway name" value="Signaling by Hippo"/>
</dbReference>
<dbReference type="Reactome" id="R-MMU-5620912">
    <property type="pathway name" value="Anchoring of the basal body to the plasma membrane"/>
</dbReference>
<dbReference type="BioGRID-ORCS" id="260305">
    <property type="hits" value="0 hits in 76 CRISPR screens"/>
</dbReference>
<dbReference type="PRO" id="PR:P59240"/>
<dbReference type="Proteomes" id="UP000000589">
    <property type="component" value="Chromosome 4"/>
</dbReference>
<dbReference type="RNAct" id="P59240">
    <property type="molecule type" value="protein"/>
</dbReference>
<dbReference type="Bgee" id="ENSMUSG00000039577">
    <property type="expression patterns" value="Expressed in lumbar subsegment of spinal cord and 111 other cell types or tissues"/>
</dbReference>
<dbReference type="GO" id="GO:0005923">
    <property type="term" value="C:bicellular tight junction"/>
    <property type="evidence" value="ECO:0007669"/>
    <property type="project" value="UniProtKB-SubCell"/>
</dbReference>
<dbReference type="GO" id="GO:0005911">
    <property type="term" value="C:cell-cell junction"/>
    <property type="evidence" value="ECO:0000250"/>
    <property type="project" value="UniProtKB"/>
</dbReference>
<dbReference type="GO" id="GO:0005814">
    <property type="term" value="C:centriole"/>
    <property type="evidence" value="ECO:0000314"/>
    <property type="project" value="MGI"/>
</dbReference>
<dbReference type="GO" id="GO:0005813">
    <property type="term" value="C:centrosome"/>
    <property type="evidence" value="ECO:0007669"/>
    <property type="project" value="UniProtKB-SubCell"/>
</dbReference>
<dbReference type="GO" id="GO:0036064">
    <property type="term" value="C:ciliary basal body"/>
    <property type="evidence" value="ECO:0007669"/>
    <property type="project" value="Ensembl"/>
</dbReference>
<dbReference type="GO" id="GO:0097546">
    <property type="term" value="C:ciliary base"/>
    <property type="evidence" value="ECO:0000314"/>
    <property type="project" value="MGI"/>
</dbReference>
<dbReference type="GO" id="GO:0035869">
    <property type="term" value="C:ciliary transition zone"/>
    <property type="evidence" value="ECO:0000314"/>
    <property type="project" value="MGI"/>
</dbReference>
<dbReference type="GO" id="GO:0005737">
    <property type="term" value="C:cytoplasm"/>
    <property type="evidence" value="ECO:0000314"/>
    <property type="project" value="CACAO"/>
</dbReference>
<dbReference type="GO" id="GO:0005829">
    <property type="term" value="C:cytosol"/>
    <property type="evidence" value="ECO:0007669"/>
    <property type="project" value="Ensembl"/>
</dbReference>
<dbReference type="GO" id="GO:0016604">
    <property type="term" value="C:nuclear body"/>
    <property type="evidence" value="ECO:0007669"/>
    <property type="project" value="Ensembl"/>
</dbReference>
<dbReference type="GO" id="GO:0032391">
    <property type="term" value="C:photoreceptor connecting cilium"/>
    <property type="evidence" value="ECO:0000314"/>
    <property type="project" value="MGI"/>
</dbReference>
<dbReference type="GO" id="GO:0120206">
    <property type="term" value="C:photoreceptor distal connecting cilium"/>
    <property type="evidence" value="ECO:0000314"/>
    <property type="project" value="MGI"/>
</dbReference>
<dbReference type="GO" id="GO:0097470">
    <property type="term" value="C:ribbon synapse"/>
    <property type="evidence" value="ECO:0000314"/>
    <property type="project" value="MGI"/>
</dbReference>
<dbReference type="GO" id="GO:0030317">
    <property type="term" value="P:flagellated sperm motility"/>
    <property type="evidence" value="ECO:0000315"/>
    <property type="project" value="MGI"/>
</dbReference>
<dbReference type="GO" id="GO:0090090">
    <property type="term" value="P:negative regulation of canonical Wnt signaling pathway"/>
    <property type="evidence" value="ECO:0007669"/>
    <property type="project" value="Ensembl"/>
</dbReference>
<dbReference type="GO" id="GO:0045494">
    <property type="term" value="P:photoreceptor cell maintenance"/>
    <property type="evidence" value="ECO:0000315"/>
    <property type="project" value="MGI"/>
</dbReference>
<dbReference type="GO" id="GO:0035845">
    <property type="term" value="P:photoreceptor cell outer segment organization"/>
    <property type="evidence" value="ECO:0000315"/>
    <property type="project" value="MGI"/>
</dbReference>
<dbReference type="GO" id="GO:1903348">
    <property type="term" value="P:positive regulation of bicellular tight junction assembly"/>
    <property type="evidence" value="ECO:0007669"/>
    <property type="project" value="Ensembl"/>
</dbReference>
<dbReference type="GO" id="GO:0060041">
    <property type="term" value="P:retina development in camera-type eye"/>
    <property type="evidence" value="ECO:0000315"/>
    <property type="project" value="MGI"/>
</dbReference>
<dbReference type="CDD" id="cd22239">
    <property type="entry name" value="NPHP4"/>
    <property type="match status" value="1"/>
</dbReference>
<dbReference type="InterPro" id="IPR029775">
    <property type="entry name" value="NPHP4"/>
</dbReference>
<dbReference type="PANTHER" id="PTHR31043">
    <property type="entry name" value="NEPHROCYSTIN-4"/>
    <property type="match status" value="1"/>
</dbReference>
<dbReference type="PANTHER" id="PTHR31043:SF3">
    <property type="entry name" value="NEPHROCYSTIN-4"/>
    <property type="match status" value="1"/>
</dbReference>
<feature type="chain" id="PRO_0000159770" description="Nephrocystin-4">
    <location>
        <begin position="1"/>
        <end position="1425"/>
    </location>
</feature>
<feature type="region of interest" description="Disordered" evidence="3">
    <location>
        <begin position="448"/>
        <end position="554"/>
    </location>
</feature>
<feature type="region of interest" description="Sufficient for basal bodies localization" evidence="2">
    <location>
        <begin position="822"/>
        <end position="1425"/>
    </location>
</feature>
<feature type="compositionally biased region" description="Low complexity" evidence="3">
    <location>
        <begin position="473"/>
        <end position="484"/>
    </location>
</feature>
<feature type="compositionally biased region" description="Low complexity" evidence="3">
    <location>
        <begin position="507"/>
        <end position="530"/>
    </location>
</feature>
<feature type="modified residue" description="Phosphoserine" evidence="2">
    <location>
        <position position="145"/>
    </location>
</feature>
<gene>
    <name type="primary">Nphp4</name>
</gene>
<accession>P59240</accession>
<accession>B1AS30</accession>
<name>NPHP4_MOUSE</name>
<protein>
    <recommendedName>
        <fullName>Nephrocystin-4</fullName>
    </recommendedName>
    <alternativeName>
        <fullName>Nephroretinin</fullName>
    </alternativeName>
</protein>